<name>UGPA_ECOUT</name>
<gene>
    <name type="primary">ugpA</name>
    <name type="ordered locus">UTI89_C3959</name>
</gene>
<keyword id="KW-0997">Cell inner membrane</keyword>
<keyword id="KW-1003">Cell membrane</keyword>
<keyword id="KW-0472">Membrane</keyword>
<keyword id="KW-0812">Transmembrane</keyword>
<keyword id="KW-1133">Transmembrane helix</keyword>
<keyword id="KW-0813">Transport</keyword>
<protein>
    <recommendedName>
        <fullName evidence="1">sn-glycerol-3-phosphate transport system permease protein UgpA</fullName>
    </recommendedName>
</protein>
<reference key="1">
    <citation type="journal article" date="2006" name="Proc. Natl. Acad. Sci. U.S.A.">
        <title>Identification of genes subject to positive selection in uropathogenic strains of Escherichia coli: a comparative genomics approach.</title>
        <authorList>
            <person name="Chen S.L."/>
            <person name="Hung C.-S."/>
            <person name="Xu J."/>
            <person name="Reigstad C.S."/>
            <person name="Magrini V."/>
            <person name="Sabo A."/>
            <person name="Blasiar D."/>
            <person name="Bieri T."/>
            <person name="Meyer R.R."/>
            <person name="Ozersky P."/>
            <person name="Armstrong J.R."/>
            <person name="Fulton R.S."/>
            <person name="Latreille J.P."/>
            <person name="Spieth J."/>
            <person name="Hooton T.M."/>
            <person name="Mardis E.R."/>
            <person name="Hultgren S.J."/>
            <person name="Gordon J.I."/>
        </authorList>
    </citation>
    <scope>NUCLEOTIDE SEQUENCE [LARGE SCALE GENOMIC DNA]</scope>
    <source>
        <strain>UTI89 / UPEC</strain>
    </source>
</reference>
<evidence type="ECO:0000250" key="1">
    <source>
        <dbReference type="UniProtKB" id="P10905"/>
    </source>
</evidence>
<evidence type="ECO:0000255" key="2"/>
<evidence type="ECO:0000255" key="3">
    <source>
        <dbReference type="PROSITE-ProRule" id="PRU00441"/>
    </source>
</evidence>
<evidence type="ECO:0000305" key="4"/>
<comment type="function">
    <text evidence="1">Part of the ABC transporter complex UgpBAEC involved in sn-glycerol-3-phosphate (G3P) import. Probably responsible for the translocation of the substrate across the membrane.</text>
</comment>
<comment type="subunit">
    <text evidence="1">The complex is composed of two ATP-binding proteins (UgpC), two transmembrane proteins (UgpA and UgpE) and a solute-binding protein (UgpB).</text>
</comment>
<comment type="subcellular location">
    <subcellularLocation>
        <location evidence="1">Cell inner membrane</location>
        <topology evidence="2">Multi-pass membrane protein</topology>
    </subcellularLocation>
</comment>
<comment type="similarity">
    <text evidence="4">Belongs to the binding-protein-dependent transport system permease family. UgpAE subfamily.</text>
</comment>
<accession>Q1R5H6</accession>
<sequence length="295" mass="33248">MSSSRPVFRSRWLPYLLVAPQLIITVIFFIWPAGEALWYSLQSVDPFGFSSQFVGLDNFVTLFHDSYYLDAFWTTIKFSTFVTVSGLLVSLFFAALVEYIVRGSRFYQTLMLLPYAVAPAVAAVLWIFLFNPGRGLITHFLAEFGYDWNHAQNSGQAMFLVVFASVWKQISYNFLFFYAALQSIPRSLIEAAAIDGAGPIRRFFKIALPLIAPVSFFLLVVNLVYAFFDTFPVIDAATSGGPVQATTTLIYKIYREGFTGLDLASSAAQSVVLMFLVIVLTVVQFRYVESKVRYQ</sequence>
<organism>
    <name type="scientific">Escherichia coli (strain UTI89 / UPEC)</name>
    <dbReference type="NCBI Taxonomy" id="364106"/>
    <lineage>
        <taxon>Bacteria</taxon>
        <taxon>Pseudomonadati</taxon>
        <taxon>Pseudomonadota</taxon>
        <taxon>Gammaproteobacteria</taxon>
        <taxon>Enterobacterales</taxon>
        <taxon>Enterobacteriaceae</taxon>
        <taxon>Escherichia</taxon>
    </lineage>
</organism>
<dbReference type="EMBL" id="CP000243">
    <property type="protein sequence ID" value="ABE09388.1"/>
    <property type="molecule type" value="Genomic_DNA"/>
</dbReference>
<dbReference type="RefSeq" id="WP_000099282.1">
    <property type="nucleotide sequence ID" value="NZ_CP064825.1"/>
</dbReference>
<dbReference type="SMR" id="Q1R5H6"/>
<dbReference type="KEGG" id="eci:UTI89_C3959"/>
<dbReference type="HOGENOM" id="CLU_016047_0_2_6"/>
<dbReference type="Proteomes" id="UP000001952">
    <property type="component" value="Chromosome"/>
</dbReference>
<dbReference type="GO" id="GO:0005886">
    <property type="term" value="C:plasma membrane"/>
    <property type="evidence" value="ECO:0007669"/>
    <property type="project" value="UniProtKB-SubCell"/>
</dbReference>
<dbReference type="GO" id="GO:0055085">
    <property type="term" value="P:transmembrane transport"/>
    <property type="evidence" value="ECO:0007669"/>
    <property type="project" value="InterPro"/>
</dbReference>
<dbReference type="CDD" id="cd06261">
    <property type="entry name" value="TM_PBP2"/>
    <property type="match status" value="1"/>
</dbReference>
<dbReference type="FunFam" id="1.10.3720.10:FF:000028">
    <property type="entry name" value="sn-glycerol-3-phosphate ABC transporter permease UgpA"/>
    <property type="match status" value="1"/>
</dbReference>
<dbReference type="Gene3D" id="1.10.3720.10">
    <property type="entry name" value="MetI-like"/>
    <property type="match status" value="1"/>
</dbReference>
<dbReference type="InterPro" id="IPR000515">
    <property type="entry name" value="MetI-like"/>
</dbReference>
<dbReference type="InterPro" id="IPR035906">
    <property type="entry name" value="MetI-like_sf"/>
</dbReference>
<dbReference type="InterPro" id="IPR050809">
    <property type="entry name" value="UgpAE/MalFG_permease"/>
</dbReference>
<dbReference type="NCBIfam" id="NF007852">
    <property type="entry name" value="PRK10561.1"/>
    <property type="match status" value="1"/>
</dbReference>
<dbReference type="PANTHER" id="PTHR43227">
    <property type="entry name" value="BLL4140 PROTEIN"/>
    <property type="match status" value="1"/>
</dbReference>
<dbReference type="PANTHER" id="PTHR43227:SF9">
    <property type="entry name" value="SN-GLYCEROL-3-PHOSPHATE TRANSPORT SYSTEM PERMEASE PROTEIN UGPA"/>
    <property type="match status" value="1"/>
</dbReference>
<dbReference type="Pfam" id="PF00528">
    <property type="entry name" value="BPD_transp_1"/>
    <property type="match status" value="1"/>
</dbReference>
<dbReference type="SUPFAM" id="SSF161098">
    <property type="entry name" value="MetI-like"/>
    <property type="match status" value="1"/>
</dbReference>
<dbReference type="PROSITE" id="PS50928">
    <property type="entry name" value="ABC_TM1"/>
    <property type="match status" value="1"/>
</dbReference>
<proteinExistence type="inferred from homology"/>
<feature type="chain" id="PRO_0000292825" description="sn-glycerol-3-phosphate transport system permease protein UgpA">
    <location>
        <begin position="1"/>
        <end position="295"/>
    </location>
</feature>
<feature type="topological domain" description="Cytoplasmic" evidence="2">
    <location>
        <begin position="1"/>
        <end position="11"/>
    </location>
</feature>
<feature type="transmembrane region" description="Helical" evidence="3">
    <location>
        <begin position="12"/>
        <end position="32"/>
    </location>
</feature>
<feature type="topological domain" description="Periplasmic" evidence="2">
    <location>
        <begin position="33"/>
        <end position="80"/>
    </location>
</feature>
<feature type="transmembrane region" description="Helical" evidence="3">
    <location>
        <begin position="81"/>
        <end position="101"/>
    </location>
</feature>
<feature type="topological domain" description="Cytoplasmic" evidence="2">
    <location>
        <begin position="102"/>
        <end position="109"/>
    </location>
</feature>
<feature type="transmembrane region" description="Helical" evidence="3">
    <location>
        <begin position="110"/>
        <end position="130"/>
    </location>
</feature>
<feature type="topological domain" description="Periplasmic" evidence="2">
    <location>
        <begin position="131"/>
        <end position="156"/>
    </location>
</feature>
<feature type="transmembrane region" description="Helical" evidence="3">
    <location>
        <begin position="157"/>
        <end position="177"/>
    </location>
</feature>
<feature type="topological domain" description="Cytoplasmic" evidence="2">
    <location>
        <begin position="178"/>
        <end position="207"/>
    </location>
</feature>
<feature type="transmembrane region" description="Helical" evidence="3">
    <location>
        <begin position="208"/>
        <end position="228"/>
    </location>
</feature>
<feature type="topological domain" description="Periplasmic" evidence="2">
    <location>
        <begin position="229"/>
        <end position="262"/>
    </location>
</feature>
<feature type="transmembrane region" description="Helical" evidence="3">
    <location>
        <begin position="263"/>
        <end position="283"/>
    </location>
</feature>
<feature type="topological domain" description="Cytoplasmic" evidence="2">
    <location>
        <begin position="284"/>
        <end position="295"/>
    </location>
</feature>
<feature type="domain" description="ABC transmembrane type-1" evidence="3">
    <location>
        <begin position="76"/>
        <end position="284"/>
    </location>
</feature>